<evidence type="ECO:0000255" key="1">
    <source>
        <dbReference type="HAMAP-Rule" id="MF_00185"/>
    </source>
</evidence>
<evidence type="ECO:0000305" key="2"/>
<gene>
    <name evidence="1" type="primary">miaA</name>
    <name type="ordered locus">SFV_4329</name>
</gene>
<sequence>MSDISKASLPKAIFLMGPTASGKTALAIELRKILPVELISVDSALIYKGMDIGTAKPNAEELLAAPHRLLDIRDPSQAYSAADFRRDALAEMADITAAGRIPLLVGGTMLYFKALLEGLSPLPSADPEVRARIEQQAAEQGWESLHRQLQEVDPVAAARIHPNDPQRLSRALEVFFISGKTLTELTQTSGDALPYQVHQFAIAPASRELLHQRIEQRFHQMLASGFEAEVRALFARGDLHTDLPSIRCVGYRQMWSYLEGEISYDEMVYRGVCATRQLAKRQITWLRGWEGVHWLDSEKPEQARDEVLQVVGAIAG</sequence>
<accession>Q0SXB1</accession>
<organism>
    <name type="scientific">Shigella flexneri serotype 5b (strain 8401)</name>
    <dbReference type="NCBI Taxonomy" id="373384"/>
    <lineage>
        <taxon>Bacteria</taxon>
        <taxon>Pseudomonadati</taxon>
        <taxon>Pseudomonadota</taxon>
        <taxon>Gammaproteobacteria</taxon>
        <taxon>Enterobacterales</taxon>
        <taxon>Enterobacteriaceae</taxon>
        <taxon>Shigella</taxon>
    </lineage>
</organism>
<protein>
    <recommendedName>
        <fullName evidence="1">tRNA dimethylallyltransferase</fullName>
        <ecNumber evidence="1">2.5.1.75</ecNumber>
    </recommendedName>
    <alternativeName>
        <fullName evidence="1">Dimethylallyl diphosphate:tRNA dimethylallyltransferase</fullName>
        <shortName evidence="1">DMAPP:tRNA dimethylallyltransferase</shortName>
        <shortName evidence="1">DMATase</shortName>
    </alternativeName>
    <alternativeName>
        <fullName evidence="1">Isopentenyl-diphosphate:tRNA isopentenyltransferase</fullName>
        <shortName evidence="1">IPP transferase</shortName>
        <shortName evidence="1">IPPT</shortName>
        <shortName evidence="1">IPTase</shortName>
    </alternativeName>
</protein>
<feature type="chain" id="PRO_0000377323" description="tRNA dimethylallyltransferase">
    <location>
        <begin position="1"/>
        <end position="316"/>
    </location>
</feature>
<feature type="region of interest" description="Interaction with substrate tRNA" evidence="1">
    <location>
        <begin position="42"/>
        <end position="45"/>
    </location>
</feature>
<feature type="region of interest" description="Interaction with substrate tRNA" evidence="1">
    <location>
        <begin position="166"/>
        <end position="170"/>
    </location>
</feature>
<feature type="region of interest" description="Interaction with substrate tRNA" evidence="1">
    <location>
        <begin position="247"/>
        <end position="252"/>
    </location>
</feature>
<feature type="region of interest" description="Interaction with substrate tRNA" evidence="1">
    <location>
        <begin position="280"/>
        <end position="287"/>
    </location>
</feature>
<feature type="binding site" evidence="1">
    <location>
        <begin position="17"/>
        <end position="24"/>
    </location>
    <ligand>
        <name>ATP</name>
        <dbReference type="ChEBI" id="CHEBI:30616"/>
    </ligand>
</feature>
<feature type="binding site" evidence="1">
    <location>
        <begin position="19"/>
        <end position="24"/>
    </location>
    <ligand>
        <name>substrate</name>
    </ligand>
</feature>
<feature type="site" description="Interaction with substrate tRNA" evidence="1">
    <location>
        <position position="108"/>
    </location>
</feature>
<feature type="site" description="Interaction with substrate tRNA" evidence="1">
    <location>
        <position position="130"/>
    </location>
</feature>
<reference key="1">
    <citation type="journal article" date="2006" name="BMC Genomics">
        <title>Complete genome sequence of Shigella flexneri 5b and comparison with Shigella flexneri 2a.</title>
        <authorList>
            <person name="Nie H."/>
            <person name="Yang F."/>
            <person name="Zhang X."/>
            <person name="Yang J."/>
            <person name="Chen L."/>
            <person name="Wang J."/>
            <person name="Xiong Z."/>
            <person name="Peng J."/>
            <person name="Sun L."/>
            <person name="Dong J."/>
            <person name="Xue Y."/>
            <person name="Xu X."/>
            <person name="Chen S."/>
            <person name="Yao Z."/>
            <person name="Shen Y."/>
            <person name="Jin Q."/>
        </authorList>
    </citation>
    <scope>NUCLEOTIDE SEQUENCE [LARGE SCALE GENOMIC DNA]</scope>
    <source>
        <strain>8401</strain>
    </source>
</reference>
<proteinExistence type="inferred from homology"/>
<dbReference type="EC" id="2.5.1.75" evidence="1"/>
<dbReference type="EMBL" id="CP000266">
    <property type="protein sequence ID" value="ABF06304.1"/>
    <property type="status" value="ALT_INIT"/>
    <property type="molecule type" value="Genomic_DNA"/>
</dbReference>
<dbReference type="RefSeq" id="WP_001280345.1">
    <property type="nucleotide sequence ID" value="NC_008258.1"/>
</dbReference>
<dbReference type="SMR" id="Q0SXB1"/>
<dbReference type="GeneID" id="93777650"/>
<dbReference type="KEGG" id="sfv:SFV_4329"/>
<dbReference type="HOGENOM" id="CLU_032616_0_0_6"/>
<dbReference type="Proteomes" id="UP000000659">
    <property type="component" value="Chromosome"/>
</dbReference>
<dbReference type="GO" id="GO:0005524">
    <property type="term" value="F:ATP binding"/>
    <property type="evidence" value="ECO:0007669"/>
    <property type="project" value="UniProtKB-UniRule"/>
</dbReference>
<dbReference type="GO" id="GO:0052381">
    <property type="term" value="F:tRNA dimethylallyltransferase activity"/>
    <property type="evidence" value="ECO:0007669"/>
    <property type="project" value="UniProtKB-UniRule"/>
</dbReference>
<dbReference type="GO" id="GO:0006400">
    <property type="term" value="P:tRNA modification"/>
    <property type="evidence" value="ECO:0007669"/>
    <property type="project" value="TreeGrafter"/>
</dbReference>
<dbReference type="FunFam" id="1.10.20.140:FF:000001">
    <property type="entry name" value="tRNA dimethylallyltransferase"/>
    <property type="match status" value="1"/>
</dbReference>
<dbReference type="FunFam" id="1.10.287.890:FF:000001">
    <property type="entry name" value="tRNA dimethylallyltransferase"/>
    <property type="match status" value="1"/>
</dbReference>
<dbReference type="Gene3D" id="1.10.20.140">
    <property type="match status" value="1"/>
</dbReference>
<dbReference type="Gene3D" id="1.10.287.890">
    <property type="entry name" value="Crystal structure of tRNA isopentenylpyrophosphate transferase (bh2366) domain"/>
    <property type="match status" value="1"/>
</dbReference>
<dbReference type="Gene3D" id="3.40.50.300">
    <property type="entry name" value="P-loop containing nucleotide triphosphate hydrolases"/>
    <property type="match status" value="1"/>
</dbReference>
<dbReference type="HAMAP" id="MF_00185">
    <property type="entry name" value="IPP_trans"/>
    <property type="match status" value="1"/>
</dbReference>
<dbReference type="InterPro" id="IPR039657">
    <property type="entry name" value="Dimethylallyltransferase"/>
</dbReference>
<dbReference type="InterPro" id="IPR018022">
    <property type="entry name" value="IPT"/>
</dbReference>
<dbReference type="InterPro" id="IPR027417">
    <property type="entry name" value="P-loop_NTPase"/>
</dbReference>
<dbReference type="NCBIfam" id="TIGR00174">
    <property type="entry name" value="miaA"/>
    <property type="match status" value="1"/>
</dbReference>
<dbReference type="PANTHER" id="PTHR11088">
    <property type="entry name" value="TRNA DIMETHYLALLYLTRANSFERASE"/>
    <property type="match status" value="1"/>
</dbReference>
<dbReference type="PANTHER" id="PTHR11088:SF60">
    <property type="entry name" value="TRNA DIMETHYLALLYLTRANSFERASE"/>
    <property type="match status" value="1"/>
</dbReference>
<dbReference type="Pfam" id="PF01715">
    <property type="entry name" value="IPPT"/>
    <property type="match status" value="1"/>
</dbReference>
<dbReference type="SUPFAM" id="SSF52540">
    <property type="entry name" value="P-loop containing nucleoside triphosphate hydrolases"/>
    <property type="match status" value="1"/>
</dbReference>
<name>MIAA_SHIF8</name>
<comment type="function">
    <text evidence="1">Catalyzes the transfer of a dimethylallyl group onto the adenine at position 37 in tRNAs that read codons beginning with uridine, leading to the formation of N6-(dimethylallyl)adenosine (i(6)A).</text>
</comment>
<comment type="catalytic activity">
    <reaction evidence="1">
        <text>adenosine(37) in tRNA + dimethylallyl diphosphate = N(6)-dimethylallyladenosine(37) in tRNA + diphosphate</text>
        <dbReference type="Rhea" id="RHEA:26482"/>
        <dbReference type="Rhea" id="RHEA-COMP:10162"/>
        <dbReference type="Rhea" id="RHEA-COMP:10375"/>
        <dbReference type="ChEBI" id="CHEBI:33019"/>
        <dbReference type="ChEBI" id="CHEBI:57623"/>
        <dbReference type="ChEBI" id="CHEBI:74411"/>
        <dbReference type="ChEBI" id="CHEBI:74415"/>
        <dbReference type="EC" id="2.5.1.75"/>
    </reaction>
</comment>
<comment type="cofactor">
    <cofactor evidence="1">
        <name>Mg(2+)</name>
        <dbReference type="ChEBI" id="CHEBI:18420"/>
    </cofactor>
</comment>
<comment type="subunit">
    <text evidence="1">Monomer.</text>
</comment>
<comment type="similarity">
    <text evidence="1">Belongs to the IPP transferase family.</text>
</comment>
<comment type="sequence caution" evidence="2">
    <conflict type="erroneous initiation">
        <sequence resource="EMBL-CDS" id="ABF06304"/>
    </conflict>
</comment>
<keyword id="KW-0067">ATP-binding</keyword>
<keyword id="KW-0460">Magnesium</keyword>
<keyword id="KW-0547">Nucleotide-binding</keyword>
<keyword id="KW-0808">Transferase</keyword>
<keyword id="KW-0819">tRNA processing</keyword>